<protein>
    <recommendedName>
        <fullName evidence="1">tRNA dimethylallyltransferase</fullName>
        <ecNumber evidence="1">2.5.1.75</ecNumber>
    </recommendedName>
    <alternativeName>
        <fullName evidence="1">Dimethylallyl diphosphate:tRNA dimethylallyltransferase</fullName>
        <shortName evidence="1">DMAPP:tRNA dimethylallyltransferase</shortName>
        <shortName evidence="1">DMATase</shortName>
    </alternativeName>
    <alternativeName>
        <fullName evidence="1">Isopentenyl-diphosphate:tRNA isopentenyltransferase</fullName>
        <shortName evidence="1">IPP transferase</shortName>
        <shortName evidence="1">IPPT</shortName>
        <shortName evidence="1">IPTase</shortName>
    </alternativeName>
</protein>
<dbReference type="EC" id="2.5.1.75" evidence="1"/>
<dbReference type="EMBL" id="CP000820">
    <property type="protein sequence ID" value="ABW10682.1"/>
    <property type="molecule type" value="Genomic_DNA"/>
</dbReference>
<dbReference type="RefSeq" id="WP_020458857.1">
    <property type="nucleotide sequence ID" value="NC_009921.1"/>
</dbReference>
<dbReference type="SMR" id="A8L6K0"/>
<dbReference type="STRING" id="298653.Franean1_1228"/>
<dbReference type="KEGG" id="fre:Franean1_1228"/>
<dbReference type="eggNOG" id="COG0324">
    <property type="taxonomic scope" value="Bacteria"/>
</dbReference>
<dbReference type="HOGENOM" id="CLU_032616_0_1_11"/>
<dbReference type="GO" id="GO:0005524">
    <property type="term" value="F:ATP binding"/>
    <property type="evidence" value="ECO:0007669"/>
    <property type="project" value="UniProtKB-UniRule"/>
</dbReference>
<dbReference type="GO" id="GO:0052381">
    <property type="term" value="F:tRNA dimethylallyltransferase activity"/>
    <property type="evidence" value="ECO:0007669"/>
    <property type="project" value="UniProtKB-UniRule"/>
</dbReference>
<dbReference type="GO" id="GO:0006400">
    <property type="term" value="P:tRNA modification"/>
    <property type="evidence" value="ECO:0007669"/>
    <property type="project" value="TreeGrafter"/>
</dbReference>
<dbReference type="FunFam" id="1.10.20.140:FF:000001">
    <property type="entry name" value="tRNA dimethylallyltransferase"/>
    <property type="match status" value="1"/>
</dbReference>
<dbReference type="Gene3D" id="1.10.20.140">
    <property type="match status" value="1"/>
</dbReference>
<dbReference type="Gene3D" id="3.40.50.300">
    <property type="entry name" value="P-loop containing nucleotide triphosphate hydrolases"/>
    <property type="match status" value="1"/>
</dbReference>
<dbReference type="HAMAP" id="MF_00185">
    <property type="entry name" value="IPP_trans"/>
    <property type="match status" value="1"/>
</dbReference>
<dbReference type="InterPro" id="IPR039657">
    <property type="entry name" value="Dimethylallyltransferase"/>
</dbReference>
<dbReference type="InterPro" id="IPR018022">
    <property type="entry name" value="IPT"/>
</dbReference>
<dbReference type="InterPro" id="IPR027417">
    <property type="entry name" value="P-loop_NTPase"/>
</dbReference>
<dbReference type="NCBIfam" id="TIGR00174">
    <property type="entry name" value="miaA"/>
    <property type="match status" value="1"/>
</dbReference>
<dbReference type="PANTHER" id="PTHR11088">
    <property type="entry name" value="TRNA DIMETHYLALLYLTRANSFERASE"/>
    <property type="match status" value="1"/>
</dbReference>
<dbReference type="PANTHER" id="PTHR11088:SF60">
    <property type="entry name" value="TRNA DIMETHYLALLYLTRANSFERASE"/>
    <property type="match status" value="1"/>
</dbReference>
<dbReference type="Pfam" id="PF01715">
    <property type="entry name" value="IPPT"/>
    <property type="match status" value="1"/>
</dbReference>
<dbReference type="SUPFAM" id="SSF52540">
    <property type="entry name" value="P-loop containing nucleoside triphosphate hydrolases"/>
    <property type="match status" value="1"/>
</dbReference>
<comment type="function">
    <text evidence="1">Catalyzes the transfer of a dimethylallyl group onto the adenine at position 37 in tRNAs that read codons beginning with uridine, leading to the formation of N6-(dimethylallyl)adenosine (i(6)A).</text>
</comment>
<comment type="catalytic activity">
    <reaction evidence="1">
        <text>adenosine(37) in tRNA + dimethylallyl diphosphate = N(6)-dimethylallyladenosine(37) in tRNA + diphosphate</text>
        <dbReference type="Rhea" id="RHEA:26482"/>
        <dbReference type="Rhea" id="RHEA-COMP:10162"/>
        <dbReference type="Rhea" id="RHEA-COMP:10375"/>
        <dbReference type="ChEBI" id="CHEBI:33019"/>
        <dbReference type="ChEBI" id="CHEBI:57623"/>
        <dbReference type="ChEBI" id="CHEBI:74411"/>
        <dbReference type="ChEBI" id="CHEBI:74415"/>
        <dbReference type="EC" id="2.5.1.75"/>
    </reaction>
</comment>
<comment type="cofactor">
    <cofactor evidence="1">
        <name>Mg(2+)</name>
        <dbReference type="ChEBI" id="CHEBI:18420"/>
    </cofactor>
</comment>
<comment type="subunit">
    <text evidence="1">Monomer.</text>
</comment>
<comment type="similarity">
    <text evidence="1">Belongs to the IPP transferase family.</text>
</comment>
<evidence type="ECO:0000255" key="1">
    <source>
        <dbReference type="HAMAP-Rule" id="MF_00185"/>
    </source>
</evidence>
<reference key="1">
    <citation type="journal article" date="2007" name="Genome Res.">
        <title>Genome characteristics of facultatively symbiotic Frankia sp. strains reflect host range and host plant biogeography.</title>
        <authorList>
            <person name="Normand P."/>
            <person name="Lapierre P."/>
            <person name="Tisa L.S."/>
            <person name="Gogarten J.P."/>
            <person name="Alloisio N."/>
            <person name="Bagnarol E."/>
            <person name="Bassi C.A."/>
            <person name="Berry A.M."/>
            <person name="Bickhart D.M."/>
            <person name="Choisne N."/>
            <person name="Couloux A."/>
            <person name="Cournoyer B."/>
            <person name="Cruveiller S."/>
            <person name="Daubin V."/>
            <person name="Demange N."/>
            <person name="Francino M.P."/>
            <person name="Goltsman E."/>
            <person name="Huang Y."/>
            <person name="Kopp O.R."/>
            <person name="Labarre L."/>
            <person name="Lapidus A."/>
            <person name="Lavire C."/>
            <person name="Marechal J."/>
            <person name="Martinez M."/>
            <person name="Mastronunzio J.E."/>
            <person name="Mullin B.C."/>
            <person name="Niemann J."/>
            <person name="Pujic P."/>
            <person name="Rawnsley T."/>
            <person name="Rouy Z."/>
            <person name="Schenowitz C."/>
            <person name="Sellstedt A."/>
            <person name="Tavares F."/>
            <person name="Tomkins J.P."/>
            <person name="Vallenet D."/>
            <person name="Valverde C."/>
            <person name="Wall L.G."/>
            <person name="Wang Y."/>
            <person name="Medigue C."/>
            <person name="Benson D.R."/>
        </authorList>
    </citation>
    <scope>NUCLEOTIDE SEQUENCE [LARGE SCALE GENOMIC DNA]</scope>
    <source>
        <strain>EAN1pec</strain>
    </source>
</reference>
<keyword id="KW-0067">ATP-binding</keyword>
<keyword id="KW-0460">Magnesium</keyword>
<keyword id="KW-0547">Nucleotide-binding</keyword>
<keyword id="KW-0808">Transferase</keyword>
<keyword id="KW-0819">tRNA processing</keyword>
<proteinExistence type="inferred from homology"/>
<gene>
    <name evidence="1" type="primary">miaA</name>
    <name type="ordered locus">Franean1_1228</name>
</gene>
<name>MIAA_PARS2</name>
<sequence length="318" mass="33968">MTASRDGAGLTNGATRADQAGPVIAVVGPTGAGKSDLAVEIALELGGEIVNADSMQLYRGMDIGTAKIPMVERRGVPHHLLDVWEITRAADVASYQADARRVVNGLLAAGRVPILVGGSGLYVRAVLDDLSFPGTDPAVRARLERELAEVGPGPLHERLTGLAPTAAAAILPGNGRRIVRALEVVELTGTFEATLPEYRSIYDVVQVGVDRPDLDTRIADRVELMWRAGFVDEVAALAEAGLRDGRTASRALGYAQVLAVLDGAMDSMDAAKQATTTATRRFARRQRSWFRRDPRISWLEFPDVAAALAEVRRLVGSL</sequence>
<feature type="chain" id="PRO_0000377166" description="tRNA dimethylallyltransferase">
    <location>
        <begin position="1"/>
        <end position="318"/>
    </location>
</feature>
<feature type="region of interest" description="Interaction with substrate tRNA" evidence="1">
    <location>
        <begin position="53"/>
        <end position="56"/>
    </location>
</feature>
<feature type="binding site" evidence="1">
    <location>
        <begin position="28"/>
        <end position="35"/>
    </location>
    <ligand>
        <name>ATP</name>
        <dbReference type="ChEBI" id="CHEBI:30616"/>
    </ligand>
</feature>
<feature type="binding site" evidence="1">
    <location>
        <begin position="30"/>
        <end position="35"/>
    </location>
    <ligand>
        <name>substrate</name>
    </ligand>
</feature>
<feature type="site" description="Interaction with substrate tRNA" evidence="1">
    <location>
        <position position="119"/>
    </location>
</feature>
<feature type="site" description="Interaction with substrate tRNA" evidence="1">
    <location>
        <position position="140"/>
    </location>
</feature>
<accession>A8L6K0</accession>
<organism>
    <name type="scientific">Parafrankia sp. (strain EAN1pec)</name>
    <dbReference type="NCBI Taxonomy" id="298653"/>
    <lineage>
        <taxon>Bacteria</taxon>
        <taxon>Bacillati</taxon>
        <taxon>Actinomycetota</taxon>
        <taxon>Actinomycetes</taxon>
        <taxon>Frankiales</taxon>
        <taxon>Frankiaceae</taxon>
        <taxon>Parafrankia</taxon>
    </lineage>
</organism>